<protein>
    <recommendedName>
        <fullName evidence="1">Ribulose bisphosphate carboxylase large chain</fullName>
        <shortName evidence="1">RuBisCO large subunit</shortName>
        <ecNumber evidence="1">4.1.1.39</ecNumber>
    </recommendedName>
</protein>
<comment type="function">
    <text evidence="1">RuBisCO catalyzes two reactions: the carboxylation of D-ribulose 1,5-bisphosphate, the primary event in carbon dioxide fixation, as well as the oxidative fragmentation of the pentose substrate in the photorespiration process. Both reactions occur simultaneously and in competition at the same active site.</text>
</comment>
<comment type="catalytic activity">
    <reaction evidence="1">
        <text>2 (2R)-3-phosphoglycerate + 2 H(+) = D-ribulose 1,5-bisphosphate + CO2 + H2O</text>
        <dbReference type="Rhea" id="RHEA:23124"/>
        <dbReference type="ChEBI" id="CHEBI:15377"/>
        <dbReference type="ChEBI" id="CHEBI:15378"/>
        <dbReference type="ChEBI" id="CHEBI:16526"/>
        <dbReference type="ChEBI" id="CHEBI:57870"/>
        <dbReference type="ChEBI" id="CHEBI:58272"/>
        <dbReference type="EC" id="4.1.1.39"/>
    </reaction>
</comment>
<comment type="catalytic activity">
    <reaction evidence="1">
        <text>D-ribulose 1,5-bisphosphate + O2 = 2-phosphoglycolate + (2R)-3-phosphoglycerate + 2 H(+)</text>
        <dbReference type="Rhea" id="RHEA:36631"/>
        <dbReference type="ChEBI" id="CHEBI:15378"/>
        <dbReference type="ChEBI" id="CHEBI:15379"/>
        <dbReference type="ChEBI" id="CHEBI:57870"/>
        <dbReference type="ChEBI" id="CHEBI:58033"/>
        <dbReference type="ChEBI" id="CHEBI:58272"/>
    </reaction>
</comment>
<comment type="cofactor">
    <cofactor evidence="1">
        <name>Mg(2+)</name>
        <dbReference type="ChEBI" id="CHEBI:18420"/>
    </cofactor>
    <text evidence="1">Binds 1 Mg(2+) ion per subunit.</text>
</comment>
<comment type="subunit">
    <text evidence="1">Heterohexadecamer of 8 large chains and 8 small chains; disulfide-linked. The disulfide link is formed within the large subunit homodimers.</text>
</comment>
<comment type="subcellular location">
    <subcellularLocation>
        <location>Plastid</location>
        <location>Chloroplast</location>
    </subcellularLocation>
</comment>
<comment type="PTM">
    <text evidence="1">The disulfide bond which can form in the large chain dimeric partners within the hexadecamer appears to be associated with oxidative stress and protein turnover.</text>
</comment>
<comment type="miscellaneous">
    <text evidence="1">The basic functional RuBisCO is composed of a large chain homodimer in a 'head-to-tail' conformation. In form I RuBisCO this homodimer is arranged in a barrel-like tetramer with the small subunits forming a tetrameric 'cap' on each end of the 'barrel'.</text>
</comment>
<comment type="similarity">
    <text evidence="1">Belongs to the RuBisCO large chain family. Type I subfamily.</text>
</comment>
<name>RBL_ILLOL</name>
<reference key="1">
    <citation type="journal article" date="2007" name="Mol. Phylogenet. Evol.">
        <title>Phylogenetic and evolutionary implications of complete chloroplast genome sequences of four early-diverging angiosperms: Buxus (Buxaceae), Chloranthus (Chloranthaceae), Dioscorea (Dioscoreaceae), and Illicium (Schisandraceae).</title>
        <authorList>
            <person name="Hansen D.R."/>
            <person name="Dastidar S.G."/>
            <person name="Cai Z."/>
            <person name="Penaflor C."/>
            <person name="Kuehl J.V."/>
            <person name="Boore J.L."/>
            <person name="Jansen R.K."/>
        </authorList>
    </citation>
    <scope>NUCLEOTIDE SEQUENCE [LARGE SCALE GENOMIC DNA]</scope>
</reference>
<dbReference type="EC" id="4.1.1.39" evidence="1"/>
<dbReference type="EMBL" id="EF380354">
    <property type="protein sequence ID" value="ABQ52527.1"/>
    <property type="molecule type" value="Genomic_DNA"/>
</dbReference>
<dbReference type="RefSeq" id="YP_001294278.1">
    <property type="nucleotide sequence ID" value="NC_009600.1"/>
</dbReference>
<dbReference type="SMR" id="A6MMV2"/>
<dbReference type="GeneID" id="5236799"/>
<dbReference type="GO" id="GO:0009507">
    <property type="term" value="C:chloroplast"/>
    <property type="evidence" value="ECO:0007669"/>
    <property type="project" value="UniProtKB-SubCell"/>
</dbReference>
<dbReference type="GO" id="GO:0000287">
    <property type="term" value="F:magnesium ion binding"/>
    <property type="evidence" value="ECO:0007669"/>
    <property type="project" value="UniProtKB-UniRule"/>
</dbReference>
<dbReference type="GO" id="GO:0004497">
    <property type="term" value="F:monooxygenase activity"/>
    <property type="evidence" value="ECO:0007669"/>
    <property type="project" value="UniProtKB-KW"/>
</dbReference>
<dbReference type="GO" id="GO:0016984">
    <property type="term" value="F:ribulose-bisphosphate carboxylase activity"/>
    <property type="evidence" value="ECO:0007669"/>
    <property type="project" value="UniProtKB-UniRule"/>
</dbReference>
<dbReference type="GO" id="GO:0009853">
    <property type="term" value="P:photorespiration"/>
    <property type="evidence" value="ECO:0007669"/>
    <property type="project" value="UniProtKB-KW"/>
</dbReference>
<dbReference type="GO" id="GO:0019253">
    <property type="term" value="P:reductive pentose-phosphate cycle"/>
    <property type="evidence" value="ECO:0007669"/>
    <property type="project" value="UniProtKB-UniRule"/>
</dbReference>
<dbReference type="CDD" id="cd08212">
    <property type="entry name" value="RuBisCO_large_I"/>
    <property type="match status" value="1"/>
</dbReference>
<dbReference type="FunFam" id="3.20.20.110:FF:000001">
    <property type="entry name" value="Ribulose bisphosphate carboxylase large chain"/>
    <property type="match status" value="1"/>
</dbReference>
<dbReference type="FunFam" id="3.30.70.150:FF:000001">
    <property type="entry name" value="Ribulose bisphosphate carboxylase large chain"/>
    <property type="match status" value="1"/>
</dbReference>
<dbReference type="Gene3D" id="3.20.20.110">
    <property type="entry name" value="Ribulose bisphosphate carboxylase, large subunit, C-terminal domain"/>
    <property type="match status" value="1"/>
</dbReference>
<dbReference type="Gene3D" id="3.30.70.150">
    <property type="entry name" value="RuBisCO large subunit, N-terminal domain"/>
    <property type="match status" value="1"/>
</dbReference>
<dbReference type="HAMAP" id="MF_01338">
    <property type="entry name" value="RuBisCO_L_type1"/>
    <property type="match status" value="1"/>
</dbReference>
<dbReference type="InterPro" id="IPR033966">
    <property type="entry name" value="RuBisCO"/>
</dbReference>
<dbReference type="InterPro" id="IPR020878">
    <property type="entry name" value="RuBisCo_large_chain_AS"/>
</dbReference>
<dbReference type="InterPro" id="IPR000685">
    <property type="entry name" value="RuBisCO_lsu_C"/>
</dbReference>
<dbReference type="InterPro" id="IPR036376">
    <property type="entry name" value="RuBisCO_lsu_C_sf"/>
</dbReference>
<dbReference type="InterPro" id="IPR017443">
    <property type="entry name" value="RuBisCO_lsu_fd_N"/>
</dbReference>
<dbReference type="InterPro" id="IPR036422">
    <property type="entry name" value="RuBisCO_lsu_N_sf"/>
</dbReference>
<dbReference type="InterPro" id="IPR020888">
    <property type="entry name" value="RuBisCO_lsuI"/>
</dbReference>
<dbReference type="NCBIfam" id="NF003252">
    <property type="entry name" value="PRK04208.1"/>
    <property type="match status" value="1"/>
</dbReference>
<dbReference type="PANTHER" id="PTHR42704">
    <property type="entry name" value="RIBULOSE BISPHOSPHATE CARBOXYLASE"/>
    <property type="match status" value="1"/>
</dbReference>
<dbReference type="PANTHER" id="PTHR42704:SF19">
    <property type="entry name" value="RIBULOSE BISPHOSPHATE CARBOXYLASE LARGE CHAIN"/>
    <property type="match status" value="1"/>
</dbReference>
<dbReference type="Pfam" id="PF00016">
    <property type="entry name" value="RuBisCO_large"/>
    <property type="match status" value="1"/>
</dbReference>
<dbReference type="Pfam" id="PF02788">
    <property type="entry name" value="RuBisCO_large_N"/>
    <property type="match status" value="1"/>
</dbReference>
<dbReference type="SFLD" id="SFLDG01052">
    <property type="entry name" value="RuBisCO"/>
    <property type="match status" value="1"/>
</dbReference>
<dbReference type="SFLD" id="SFLDS00014">
    <property type="entry name" value="RuBisCO"/>
    <property type="match status" value="1"/>
</dbReference>
<dbReference type="SFLD" id="SFLDG00301">
    <property type="entry name" value="RuBisCO-like_proteins"/>
    <property type="match status" value="1"/>
</dbReference>
<dbReference type="SUPFAM" id="SSF51649">
    <property type="entry name" value="RuBisCo, C-terminal domain"/>
    <property type="match status" value="1"/>
</dbReference>
<dbReference type="SUPFAM" id="SSF54966">
    <property type="entry name" value="RuBisCO, large subunit, small (N-terminal) domain"/>
    <property type="match status" value="1"/>
</dbReference>
<dbReference type="PROSITE" id="PS00157">
    <property type="entry name" value="RUBISCO_LARGE"/>
    <property type="match status" value="1"/>
</dbReference>
<feature type="propeptide" id="PRO_0000355780" evidence="1">
    <location>
        <begin position="1"/>
        <end position="2"/>
    </location>
</feature>
<feature type="chain" id="PRO_0000355781" description="Ribulose bisphosphate carboxylase large chain">
    <location>
        <begin position="3"/>
        <end position="475"/>
    </location>
</feature>
<feature type="active site" description="Proton acceptor" evidence="1">
    <location>
        <position position="175"/>
    </location>
</feature>
<feature type="active site" description="Proton acceptor" evidence="1">
    <location>
        <position position="294"/>
    </location>
</feature>
<feature type="binding site" description="in homodimeric partner" evidence="1">
    <location>
        <position position="123"/>
    </location>
    <ligand>
        <name>substrate</name>
    </ligand>
</feature>
<feature type="binding site" evidence="1">
    <location>
        <position position="173"/>
    </location>
    <ligand>
        <name>substrate</name>
    </ligand>
</feature>
<feature type="binding site" evidence="1">
    <location>
        <position position="177"/>
    </location>
    <ligand>
        <name>substrate</name>
    </ligand>
</feature>
<feature type="binding site" description="via carbamate group" evidence="1">
    <location>
        <position position="201"/>
    </location>
    <ligand>
        <name>Mg(2+)</name>
        <dbReference type="ChEBI" id="CHEBI:18420"/>
    </ligand>
</feature>
<feature type="binding site" evidence="1">
    <location>
        <position position="203"/>
    </location>
    <ligand>
        <name>Mg(2+)</name>
        <dbReference type="ChEBI" id="CHEBI:18420"/>
    </ligand>
</feature>
<feature type="binding site" evidence="1">
    <location>
        <position position="204"/>
    </location>
    <ligand>
        <name>Mg(2+)</name>
        <dbReference type="ChEBI" id="CHEBI:18420"/>
    </ligand>
</feature>
<feature type="binding site" evidence="1">
    <location>
        <position position="295"/>
    </location>
    <ligand>
        <name>substrate</name>
    </ligand>
</feature>
<feature type="binding site" evidence="1">
    <location>
        <position position="327"/>
    </location>
    <ligand>
        <name>substrate</name>
    </ligand>
</feature>
<feature type="binding site" evidence="1">
    <location>
        <position position="379"/>
    </location>
    <ligand>
        <name>substrate</name>
    </ligand>
</feature>
<feature type="site" description="Transition state stabilizer" evidence="1">
    <location>
        <position position="334"/>
    </location>
</feature>
<feature type="modified residue" description="N-acetylproline" evidence="1">
    <location>
        <position position="3"/>
    </location>
</feature>
<feature type="modified residue" description="N6,N6,N6-trimethyllysine" evidence="1">
    <location>
        <position position="14"/>
    </location>
</feature>
<feature type="modified residue" description="N6-carboxylysine" evidence="1">
    <location>
        <position position="201"/>
    </location>
</feature>
<feature type="disulfide bond" description="Interchain; in linked form" evidence="1">
    <location>
        <position position="247"/>
    </location>
</feature>
<gene>
    <name evidence="1" type="primary">rbcL</name>
</gene>
<evidence type="ECO:0000255" key="1">
    <source>
        <dbReference type="HAMAP-Rule" id="MF_01338"/>
    </source>
</evidence>
<keyword id="KW-0007">Acetylation</keyword>
<keyword id="KW-0113">Calvin cycle</keyword>
<keyword id="KW-0120">Carbon dioxide fixation</keyword>
<keyword id="KW-0150">Chloroplast</keyword>
<keyword id="KW-1015">Disulfide bond</keyword>
<keyword id="KW-0456">Lyase</keyword>
<keyword id="KW-0460">Magnesium</keyword>
<keyword id="KW-0479">Metal-binding</keyword>
<keyword id="KW-0488">Methylation</keyword>
<keyword id="KW-0503">Monooxygenase</keyword>
<keyword id="KW-0560">Oxidoreductase</keyword>
<keyword id="KW-0601">Photorespiration</keyword>
<keyword id="KW-0602">Photosynthesis</keyword>
<keyword id="KW-0934">Plastid</keyword>
<proteinExistence type="inferred from homology"/>
<geneLocation type="chloroplast"/>
<accession>A6MMV2</accession>
<sequence>MSPKTETKASVGFKAGVKDYRLTYYTPEYETKETDILAAFRVTPQPGVPPEEAGAAVAAESSTGTWTTVWTDGLTSLDRYKGRCYHIEPVAGEENQYIAYVAYPLDLFEEGSVTNMFTSIVGNVFGFKALRALRLEDLRIPPAYSKTFQGPPHGIQVERDKLNKYGRPLLGCTIKPKLGLSAKNYGRAVYECLRGGLDFTKDDENVNSQPFMRWRDRFVFCAEAIYKAQAETGEIKGHYLNATAGTCEEMIKRAVFARELGVPIVMHDYLTGGFTANTSLAHYCRDNGLLLHIHRAMHAVIDRQRNHGMHFRVLAKALRMSGGDHIHAGTVVGKLEGERDVTLGFVDLLRDDFIEKDRSRGIYFTQDWVSMPGVLPVASGGIHVWHMPALTEIFGDDSVLQFGGGTLGHPWGNAPGAVANRVALEACVQARNEGRDLAREGNEVIREASKWSPELAAACEVWREIKFEFEAMDVL</sequence>
<organism>
    <name type="scientific">Illicium oligandrum</name>
    <name type="common">Star anise</name>
    <dbReference type="NCBI Taxonomy" id="145286"/>
    <lineage>
        <taxon>Eukaryota</taxon>
        <taxon>Viridiplantae</taxon>
        <taxon>Streptophyta</taxon>
        <taxon>Embryophyta</taxon>
        <taxon>Tracheophyta</taxon>
        <taxon>Spermatophyta</taxon>
        <taxon>Magnoliopsida</taxon>
        <taxon>Austrobaileyales</taxon>
        <taxon>Schisandraceae</taxon>
        <taxon>Illicium</taxon>
    </lineage>
</organism>